<organism>
    <name type="scientific">Streptomyces coelicolor (strain ATCC BAA-471 / A3(2) / M145)</name>
    <dbReference type="NCBI Taxonomy" id="100226"/>
    <lineage>
        <taxon>Bacteria</taxon>
        <taxon>Bacillati</taxon>
        <taxon>Actinomycetota</taxon>
        <taxon>Actinomycetes</taxon>
        <taxon>Kitasatosporales</taxon>
        <taxon>Streptomycetaceae</taxon>
        <taxon>Streptomyces</taxon>
        <taxon>Streptomyces albidoflavus group</taxon>
    </lineage>
</organism>
<proteinExistence type="inferred from homology"/>
<feature type="chain" id="PRO_0000121683" description="tRNA-specific 2-thiouridylase MnmA">
    <location>
        <begin position="1"/>
        <end position="376"/>
    </location>
</feature>
<feature type="region of interest" description="Interaction with tRNA" evidence="1">
    <location>
        <begin position="158"/>
        <end position="160"/>
    </location>
</feature>
<feature type="active site" description="Nucleophile" evidence="1">
    <location>
        <position position="111"/>
    </location>
</feature>
<feature type="active site" description="Cysteine persulfide intermediate" evidence="1">
    <location>
        <position position="210"/>
    </location>
</feature>
<feature type="binding site" evidence="1">
    <location>
        <begin position="16"/>
        <end position="23"/>
    </location>
    <ligand>
        <name>ATP</name>
        <dbReference type="ChEBI" id="CHEBI:30616"/>
    </ligand>
</feature>
<feature type="binding site" evidence="1">
    <location>
        <position position="42"/>
    </location>
    <ligand>
        <name>ATP</name>
        <dbReference type="ChEBI" id="CHEBI:30616"/>
    </ligand>
</feature>
<feature type="binding site" evidence="1">
    <location>
        <position position="135"/>
    </location>
    <ligand>
        <name>ATP</name>
        <dbReference type="ChEBI" id="CHEBI:30616"/>
    </ligand>
</feature>
<feature type="site" description="Interaction with tRNA" evidence="1">
    <location>
        <position position="136"/>
    </location>
</feature>
<feature type="site" description="Interaction with tRNA" evidence="1">
    <location>
        <position position="349"/>
    </location>
</feature>
<feature type="disulfide bond" description="Alternate" evidence="1">
    <location>
        <begin position="111"/>
        <end position="210"/>
    </location>
</feature>
<name>MNMA_STRCO</name>
<gene>
    <name evidence="1" type="primary">mnmA</name>
    <name type="synonym">trmU</name>
    <name type="ordered locus">SCO5488</name>
    <name type="ORF">SC2A11.22</name>
</gene>
<comment type="function">
    <text evidence="1">Catalyzes the 2-thiolation of uridine at the wobble position (U34) of tRNA, leading to the formation of s(2)U34.</text>
</comment>
<comment type="catalytic activity">
    <reaction evidence="1">
        <text>S-sulfanyl-L-cysteinyl-[protein] + uridine(34) in tRNA + AH2 + ATP = 2-thiouridine(34) in tRNA + L-cysteinyl-[protein] + A + AMP + diphosphate + H(+)</text>
        <dbReference type="Rhea" id="RHEA:47032"/>
        <dbReference type="Rhea" id="RHEA-COMP:10131"/>
        <dbReference type="Rhea" id="RHEA-COMP:11726"/>
        <dbReference type="Rhea" id="RHEA-COMP:11727"/>
        <dbReference type="Rhea" id="RHEA-COMP:11728"/>
        <dbReference type="ChEBI" id="CHEBI:13193"/>
        <dbReference type="ChEBI" id="CHEBI:15378"/>
        <dbReference type="ChEBI" id="CHEBI:17499"/>
        <dbReference type="ChEBI" id="CHEBI:29950"/>
        <dbReference type="ChEBI" id="CHEBI:30616"/>
        <dbReference type="ChEBI" id="CHEBI:33019"/>
        <dbReference type="ChEBI" id="CHEBI:61963"/>
        <dbReference type="ChEBI" id="CHEBI:65315"/>
        <dbReference type="ChEBI" id="CHEBI:87170"/>
        <dbReference type="ChEBI" id="CHEBI:456215"/>
        <dbReference type="EC" id="2.8.1.13"/>
    </reaction>
</comment>
<comment type="subcellular location">
    <subcellularLocation>
        <location evidence="1">Cytoplasm</location>
    </subcellularLocation>
</comment>
<comment type="similarity">
    <text evidence="1">Belongs to the MnmA/TRMU family.</text>
</comment>
<keyword id="KW-0067">ATP-binding</keyword>
<keyword id="KW-0963">Cytoplasm</keyword>
<keyword id="KW-1015">Disulfide bond</keyword>
<keyword id="KW-0547">Nucleotide-binding</keyword>
<keyword id="KW-1185">Reference proteome</keyword>
<keyword id="KW-0694">RNA-binding</keyword>
<keyword id="KW-0808">Transferase</keyword>
<keyword id="KW-0819">tRNA processing</keyword>
<keyword id="KW-0820">tRNA-binding</keyword>
<sequence>MTETPQRTRPLRVLAAMSGGVDSAVAAARAAEAGHDVTGVHLALSANPQSFRTGARGCCTIEDSRDARRAADVIGIPFYVWDLADRFREDVVEDFVAEYEAGRTPNPCLRCNEKIKFAALLDKALALGFDAVCTGHYAQVILREDGVRELHRASDMAKDQSYVLGVLDDRQLAHAMFPLGDTVTTKDEIRAEAERRGLAVAKKPDSHDICFIADGNTQGFLADRLGKAEGDIVDEAGNRLGTHEGAYGYTIGQRKGLRIGTPAPDGKPRYVLDISPVNNTVTVGPAEALDVDALRAIKPRWCGAAPTGPGTYTAQLRAHGGETEVRAELVDGTLEVTFSEPVRGVAPGQAIVLYDGTRVVGSATIASTTRATAGAA</sequence>
<dbReference type="EC" id="2.8.1.13" evidence="1"/>
<dbReference type="EMBL" id="AL939123">
    <property type="protein sequence ID" value="CAA20191.1"/>
    <property type="molecule type" value="Genomic_DNA"/>
</dbReference>
<dbReference type="PIR" id="T34768">
    <property type="entry name" value="T34768"/>
</dbReference>
<dbReference type="RefSeq" id="NP_629624.1">
    <property type="nucleotide sequence ID" value="NC_003888.3"/>
</dbReference>
<dbReference type="RefSeq" id="WP_003973510.1">
    <property type="nucleotide sequence ID" value="NZ_VNID01000011.1"/>
</dbReference>
<dbReference type="SMR" id="O86583"/>
<dbReference type="FunCoup" id="O86583">
    <property type="interactions" value="391"/>
</dbReference>
<dbReference type="STRING" id="100226.gene:17763140"/>
<dbReference type="PaxDb" id="100226-SCO5488"/>
<dbReference type="KEGG" id="sco:SCO5488"/>
<dbReference type="PATRIC" id="fig|100226.15.peg.5572"/>
<dbReference type="eggNOG" id="COG0482">
    <property type="taxonomic scope" value="Bacteria"/>
</dbReference>
<dbReference type="HOGENOM" id="CLU_035188_0_2_11"/>
<dbReference type="InParanoid" id="O86583"/>
<dbReference type="OrthoDB" id="9800696at2"/>
<dbReference type="PhylomeDB" id="O86583"/>
<dbReference type="Proteomes" id="UP000001973">
    <property type="component" value="Chromosome"/>
</dbReference>
<dbReference type="GO" id="GO:0005737">
    <property type="term" value="C:cytoplasm"/>
    <property type="evidence" value="ECO:0007669"/>
    <property type="project" value="UniProtKB-SubCell"/>
</dbReference>
<dbReference type="GO" id="GO:0005524">
    <property type="term" value="F:ATP binding"/>
    <property type="evidence" value="ECO:0007669"/>
    <property type="project" value="UniProtKB-KW"/>
</dbReference>
<dbReference type="GO" id="GO:0000049">
    <property type="term" value="F:tRNA binding"/>
    <property type="evidence" value="ECO:0007669"/>
    <property type="project" value="UniProtKB-KW"/>
</dbReference>
<dbReference type="GO" id="GO:0103016">
    <property type="term" value="F:tRNA-uridine 2-sulfurtransferase activity"/>
    <property type="evidence" value="ECO:0007669"/>
    <property type="project" value="UniProtKB-EC"/>
</dbReference>
<dbReference type="GO" id="GO:0002143">
    <property type="term" value="P:tRNA wobble position uridine thiolation"/>
    <property type="evidence" value="ECO:0000318"/>
    <property type="project" value="GO_Central"/>
</dbReference>
<dbReference type="CDD" id="cd01998">
    <property type="entry name" value="MnmA_TRMU-like"/>
    <property type="match status" value="1"/>
</dbReference>
<dbReference type="FunFam" id="2.30.30.280:FF:000001">
    <property type="entry name" value="tRNA-specific 2-thiouridylase MnmA"/>
    <property type="match status" value="1"/>
</dbReference>
<dbReference type="FunFam" id="2.40.30.10:FF:000096">
    <property type="entry name" value="tRNA-specific 2-thiouridylase MnmA"/>
    <property type="match status" value="1"/>
</dbReference>
<dbReference type="FunFam" id="3.40.50.620:FF:000057">
    <property type="entry name" value="tRNA-specific 2-thiouridylase MnmA"/>
    <property type="match status" value="1"/>
</dbReference>
<dbReference type="Gene3D" id="2.30.30.280">
    <property type="entry name" value="Adenine nucleotide alpha hydrolases-like domains"/>
    <property type="match status" value="1"/>
</dbReference>
<dbReference type="Gene3D" id="3.40.50.620">
    <property type="entry name" value="HUPs"/>
    <property type="match status" value="1"/>
</dbReference>
<dbReference type="Gene3D" id="2.40.30.10">
    <property type="entry name" value="Translation factors"/>
    <property type="match status" value="1"/>
</dbReference>
<dbReference type="HAMAP" id="MF_00144">
    <property type="entry name" value="tRNA_thiouridyl_MnmA"/>
    <property type="match status" value="1"/>
</dbReference>
<dbReference type="InterPro" id="IPR004506">
    <property type="entry name" value="MnmA-like"/>
</dbReference>
<dbReference type="InterPro" id="IPR046885">
    <property type="entry name" value="MnmA-like_C"/>
</dbReference>
<dbReference type="InterPro" id="IPR046884">
    <property type="entry name" value="MnmA-like_central"/>
</dbReference>
<dbReference type="InterPro" id="IPR023382">
    <property type="entry name" value="MnmA-like_central_sf"/>
</dbReference>
<dbReference type="InterPro" id="IPR014729">
    <property type="entry name" value="Rossmann-like_a/b/a_fold"/>
</dbReference>
<dbReference type="NCBIfam" id="NF001138">
    <property type="entry name" value="PRK00143.1"/>
    <property type="match status" value="1"/>
</dbReference>
<dbReference type="NCBIfam" id="TIGR00420">
    <property type="entry name" value="trmU"/>
    <property type="match status" value="1"/>
</dbReference>
<dbReference type="PANTHER" id="PTHR11933:SF5">
    <property type="entry name" value="MITOCHONDRIAL TRNA-SPECIFIC 2-THIOURIDYLASE 1"/>
    <property type="match status" value="1"/>
</dbReference>
<dbReference type="PANTHER" id="PTHR11933">
    <property type="entry name" value="TRNA 5-METHYLAMINOMETHYL-2-THIOURIDYLATE -METHYLTRANSFERASE"/>
    <property type="match status" value="1"/>
</dbReference>
<dbReference type="Pfam" id="PF03054">
    <property type="entry name" value="tRNA_Me_trans"/>
    <property type="match status" value="1"/>
</dbReference>
<dbReference type="Pfam" id="PF20258">
    <property type="entry name" value="tRNA_Me_trans_C"/>
    <property type="match status" value="1"/>
</dbReference>
<dbReference type="Pfam" id="PF20259">
    <property type="entry name" value="tRNA_Me_trans_M"/>
    <property type="match status" value="1"/>
</dbReference>
<dbReference type="SUPFAM" id="SSF52402">
    <property type="entry name" value="Adenine nucleotide alpha hydrolases-like"/>
    <property type="match status" value="1"/>
</dbReference>
<accession>O86583</accession>
<protein>
    <recommendedName>
        <fullName evidence="1">tRNA-specific 2-thiouridylase MnmA</fullName>
        <ecNumber evidence="1">2.8.1.13</ecNumber>
    </recommendedName>
</protein>
<reference key="1">
    <citation type="journal article" date="2002" name="Nature">
        <title>Complete genome sequence of the model actinomycete Streptomyces coelicolor A3(2).</title>
        <authorList>
            <person name="Bentley S.D."/>
            <person name="Chater K.F."/>
            <person name="Cerdeno-Tarraga A.-M."/>
            <person name="Challis G.L."/>
            <person name="Thomson N.R."/>
            <person name="James K.D."/>
            <person name="Harris D.E."/>
            <person name="Quail M.A."/>
            <person name="Kieser H."/>
            <person name="Harper D."/>
            <person name="Bateman A."/>
            <person name="Brown S."/>
            <person name="Chandra G."/>
            <person name="Chen C.W."/>
            <person name="Collins M."/>
            <person name="Cronin A."/>
            <person name="Fraser A."/>
            <person name="Goble A."/>
            <person name="Hidalgo J."/>
            <person name="Hornsby T."/>
            <person name="Howarth S."/>
            <person name="Huang C.-H."/>
            <person name="Kieser T."/>
            <person name="Larke L."/>
            <person name="Murphy L.D."/>
            <person name="Oliver K."/>
            <person name="O'Neil S."/>
            <person name="Rabbinowitsch E."/>
            <person name="Rajandream M.A."/>
            <person name="Rutherford K.M."/>
            <person name="Rutter S."/>
            <person name="Seeger K."/>
            <person name="Saunders D."/>
            <person name="Sharp S."/>
            <person name="Squares R."/>
            <person name="Squares S."/>
            <person name="Taylor K."/>
            <person name="Warren T."/>
            <person name="Wietzorrek A."/>
            <person name="Woodward J.R."/>
            <person name="Barrell B.G."/>
            <person name="Parkhill J."/>
            <person name="Hopwood D.A."/>
        </authorList>
    </citation>
    <scope>NUCLEOTIDE SEQUENCE [LARGE SCALE GENOMIC DNA]</scope>
    <source>
        <strain>ATCC BAA-471 / A3(2) / M145</strain>
    </source>
</reference>
<evidence type="ECO:0000255" key="1">
    <source>
        <dbReference type="HAMAP-Rule" id="MF_00144"/>
    </source>
</evidence>